<sequence>MTSASTKVGEIFSAAGAAFTKLGELTMQLHPVADSSPAGAKWTETEIEMLRAAVKRFGDDLNHISCVIKERTVAQIKATVKRKVYEDSGIPLPADSPKKGPKKVASGVLSPPPTAPPPSSSSVPEAGGPPIKKQKADVTLSALNDSDANSDLVDIEGLGETPPTKKLNFDQA</sequence>
<proteinExistence type="evidence at transcript level"/>
<organism>
    <name type="scientific">Bos taurus</name>
    <name type="common">Bovine</name>
    <dbReference type="NCBI Taxonomy" id="9913"/>
    <lineage>
        <taxon>Eukaryota</taxon>
        <taxon>Metazoa</taxon>
        <taxon>Chordata</taxon>
        <taxon>Craniata</taxon>
        <taxon>Vertebrata</taxon>
        <taxon>Euteleostomi</taxon>
        <taxon>Mammalia</taxon>
        <taxon>Eutheria</taxon>
        <taxon>Laurasiatheria</taxon>
        <taxon>Artiodactyla</taxon>
        <taxon>Ruminantia</taxon>
        <taxon>Pecora</taxon>
        <taxon>Bovidae</taxon>
        <taxon>Bovinae</taxon>
        <taxon>Bos</taxon>
    </lineage>
</organism>
<protein>
    <recommendedName>
        <fullName evidence="2">BPTF-associated chromatin complex component 1</fullName>
    </recommendedName>
    <alternativeName>
        <fullName>BPTF-associated protein of 18 kDa</fullName>
    </alternativeName>
    <alternativeName>
        <fullName>Chromatin complexes subunit BAP18</fullName>
    </alternativeName>
</protein>
<name>BAP18_BOVIN</name>
<feature type="chain" id="PRO_0000264250" description="BPTF-associated chromatin complex component 1">
    <location>
        <begin position="1"/>
        <end position="172"/>
    </location>
</feature>
<feature type="domain" description="SANT">
    <location>
        <begin position="38"/>
        <end position="86"/>
    </location>
</feature>
<feature type="region of interest" description="Disordered" evidence="4">
    <location>
        <begin position="87"/>
        <end position="172"/>
    </location>
</feature>
<feature type="compositionally biased region" description="Pro residues" evidence="4">
    <location>
        <begin position="110"/>
        <end position="119"/>
    </location>
</feature>
<feature type="compositionally biased region" description="Low complexity" evidence="4">
    <location>
        <begin position="120"/>
        <end position="130"/>
    </location>
</feature>
<feature type="modified residue" description="Phosphoserine" evidence="3">
    <location>
        <position position="96"/>
    </location>
</feature>
<dbReference type="EMBL" id="BC109638">
    <property type="protein sequence ID" value="AAI09639.1"/>
    <property type="molecule type" value="mRNA"/>
</dbReference>
<dbReference type="RefSeq" id="NP_001033181.1">
    <property type="nucleotide sequence ID" value="NM_001038092.1"/>
</dbReference>
<dbReference type="SMR" id="Q32LD1"/>
<dbReference type="FunCoup" id="Q32LD1">
    <property type="interactions" value="1483"/>
</dbReference>
<dbReference type="STRING" id="9913.ENSBTAP00000066070"/>
<dbReference type="PaxDb" id="9913-ENSBTAP00000029238"/>
<dbReference type="GeneID" id="512885"/>
<dbReference type="KEGG" id="bta:512885"/>
<dbReference type="CTD" id="512885"/>
<dbReference type="VEuPathDB" id="HostDB:ENSBTAG00000021931"/>
<dbReference type="eggNOG" id="KOG4834">
    <property type="taxonomic scope" value="Eukaryota"/>
</dbReference>
<dbReference type="HOGENOM" id="CLU_104449_0_0_1"/>
<dbReference type="InParanoid" id="Q32LD1"/>
<dbReference type="OMA" id="GKWADED"/>
<dbReference type="OrthoDB" id="10021571at2759"/>
<dbReference type="TreeFam" id="TF324877"/>
<dbReference type="Proteomes" id="UP000009136">
    <property type="component" value="Chromosome 19"/>
</dbReference>
<dbReference type="Bgee" id="ENSBTAG00000021931">
    <property type="expression patterns" value="Expressed in oocyte and 106 other cell types or tissues"/>
</dbReference>
<dbReference type="GO" id="GO:0071339">
    <property type="term" value="C:MLL1 complex"/>
    <property type="evidence" value="ECO:0000250"/>
    <property type="project" value="UniProtKB"/>
</dbReference>
<dbReference type="GO" id="GO:0016589">
    <property type="term" value="C:NURF complex"/>
    <property type="evidence" value="ECO:0000250"/>
    <property type="project" value="UniProtKB"/>
</dbReference>
<dbReference type="GO" id="GO:0003677">
    <property type="term" value="F:DNA binding"/>
    <property type="evidence" value="ECO:0007669"/>
    <property type="project" value="UniProtKB-KW"/>
</dbReference>
<dbReference type="GO" id="GO:0006325">
    <property type="term" value="P:chromatin organization"/>
    <property type="evidence" value="ECO:0007669"/>
    <property type="project" value="UniProtKB-KW"/>
</dbReference>
<dbReference type="CDD" id="cd00167">
    <property type="entry name" value="SANT"/>
    <property type="match status" value="1"/>
</dbReference>
<dbReference type="FunFam" id="1.20.58.1880:FF:000003">
    <property type="entry name" value="chromatin complexes subunit BAP18 isoform X1"/>
    <property type="match status" value="1"/>
</dbReference>
<dbReference type="Gene3D" id="1.20.58.1880">
    <property type="match status" value="1"/>
</dbReference>
<dbReference type="InterPro" id="IPR009057">
    <property type="entry name" value="Homeodomain-like_sf"/>
</dbReference>
<dbReference type="InterPro" id="IPR001005">
    <property type="entry name" value="SANT/Myb"/>
</dbReference>
<dbReference type="PANTHER" id="PTHR21397:SF2">
    <property type="entry name" value="CHROMATIN COMPLEXES SUBUNIT BAP18"/>
    <property type="match status" value="1"/>
</dbReference>
<dbReference type="PANTHER" id="PTHR21397">
    <property type="entry name" value="CHROMATIN COMPLEXES SUBUNIT BAP18-RELATED"/>
    <property type="match status" value="1"/>
</dbReference>
<dbReference type="SUPFAM" id="SSF46689">
    <property type="entry name" value="Homeodomain-like"/>
    <property type="match status" value="1"/>
</dbReference>
<gene>
    <name evidence="2" type="primary">BACC1</name>
    <name type="synonym">BAP18</name>
</gene>
<reference key="1">
    <citation type="submission" date="2005-11" db="EMBL/GenBank/DDBJ databases">
        <authorList>
            <consortium name="NIH - Mammalian Gene Collection (MGC) project"/>
        </authorList>
    </citation>
    <scope>NUCLEOTIDE SEQUENCE [LARGE SCALE MRNA]</scope>
    <source>
        <strain>Crossbred X Angus</strain>
        <tissue>Liver</tissue>
    </source>
</reference>
<keyword id="KW-0156">Chromatin regulator</keyword>
<keyword id="KW-0238">DNA-binding</keyword>
<keyword id="KW-0539">Nucleus</keyword>
<keyword id="KW-0597">Phosphoprotein</keyword>
<keyword id="KW-1185">Reference proteome</keyword>
<evidence type="ECO:0000250" key="1"/>
<evidence type="ECO:0000250" key="2">
    <source>
        <dbReference type="UniProtKB" id="Q8IXM2"/>
    </source>
</evidence>
<evidence type="ECO:0000250" key="3">
    <source>
        <dbReference type="UniProtKB" id="Q9DCT6"/>
    </source>
</evidence>
<evidence type="ECO:0000256" key="4">
    <source>
        <dbReference type="SAM" id="MobiDB-lite"/>
    </source>
</evidence>
<evidence type="ECO:0000305" key="5"/>
<accession>Q32LD1</accession>
<comment type="function">
    <text evidence="1">Component of chromatin complexes such as the MLL1/MLL and NURF complexes.</text>
</comment>
<comment type="subunit">
    <text evidence="1">Component of some MLL1/MLL complex, at least composed of the core components KMT2A/MLL1, ASH2L, HCFC1/HCF1, WDR5 and RBBP5, as well as the facultative components BACC1, CHD8, E2F6, HSP70, INO80C, KANSL1, LAS1L, MAX, MCRS1, MGA, MYST1/MOF, PELP1, PHF20, PRP31, RING2, RUVB1/TIP49A, RUVB2/TIP49B, SENP3, TAF1, TAF4, TAF6, TAF7, TAF9 and TEX10. Component of the nucleosome-remodeling factor (NURF) complex (By similarity).</text>
</comment>
<comment type="subcellular location">
    <subcellularLocation>
        <location evidence="5">Nucleus</location>
    </subcellularLocation>
</comment>